<evidence type="ECO:0000256" key="1">
    <source>
        <dbReference type="SAM" id="MobiDB-lite"/>
    </source>
</evidence>
<evidence type="ECO:0000269" key="2">
    <source>
    </source>
</evidence>
<evidence type="ECO:0000269" key="3">
    <source>
    </source>
</evidence>
<evidence type="ECO:0000269" key="4">
    <source>
    </source>
</evidence>
<evidence type="ECO:0000269" key="5">
    <source>
    </source>
</evidence>
<evidence type="ECO:0000303" key="6">
    <source>
    </source>
</evidence>
<evidence type="ECO:0000305" key="7"/>
<evidence type="ECO:0000312" key="8">
    <source>
        <dbReference type="HGNC" id="HGNC:3438"/>
    </source>
</evidence>
<evidence type="ECO:0007744" key="9">
    <source>
    </source>
</evidence>
<evidence type="ECO:0007744" key="10">
    <source>
    </source>
</evidence>
<evidence type="ECO:0007744" key="11">
    <source>
    </source>
</evidence>
<evidence type="ECO:0007744" key="12">
    <source>
    </source>
</evidence>
<evidence type="ECO:0007744" key="13">
    <source>
    </source>
</evidence>
<evidence type="ECO:0007744" key="14">
    <source>
    </source>
</evidence>
<evidence type="ECO:0007744" key="15">
    <source>
    </source>
</evidence>
<reference key="1">
    <citation type="journal article" date="2004" name="Nature">
        <title>The DNA sequence and comparative analysis of human chromosome 10.</title>
        <authorList>
            <person name="Deloukas P."/>
            <person name="Earthrowl M.E."/>
            <person name="Grafham D.V."/>
            <person name="Rubenfield M."/>
            <person name="French L."/>
            <person name="Steward C.A."/>
            <person name="Sims S.K."/>
            <person name="Jones M.C."/>
            <person name="Searle S."/>
            <person name="Scott C."/>
            <person name="Howe K."/>
            <person name="Hunt S.E."/>
            <person name="Andrews T.D."/>
            <person name="Gilbert J.G.R."/>
            <person name="Swarbreck D."/>
            <person name="Ashurst J.L."/>
            <person name="Taylor A."/>
            <person name="Battles J."/>
            <person name="Bird C.P."/>
            <person name="Ainscough R."/>
            <person name="Almeida J.P."/>
            <person name="Ashwell R.I.S."/>
            <person name="Ambrose K.D."/>
            <person name="Babbage A.K."/>
            <person name="Bagguley C.L."/>
            <person name="Bailey J."/>
            <person name="Banerjee R."/>
            <person name="Bates K."/>
            <person name="Beasley H."/>
            <person name="Bray-Allen S."/>
            <person name="Brown A.J."/>
            <person name="Brown J.Y."/>
            <person name="Burford D.C."/>
            <person name="Burrill W."/>
            <person name="Burton J."/>
            <person name="Cahill P."/>
            <person name="Camire D."/>
            <person name="Carter N.P."/>
            <person name="Chapman J.C."/>
            <person name="Clark S.Y."/>
            <person name="Clarke G."/>
            <person name="Clee C.M."/>
            <person name="Clegg S."/>
            <person name="Corby N."/>
            <person name="Coulson A."/>
            <person name="Dhami P."/>
            <person name="Dutta I."/>
            <person name="Dunn M."/>
            <person name="Faulkner L."/>
            <person name="Frankish A."/>
            <person name="Frankland J.A."/>
            <person name="Garner P."/>
            <person name="Garnett J."/>
            <person name="Gribble S."/>
            <person name="Griffiths C."/>
            <person name="Grocock R."/>
            <person name="Gustafson E."/>
            <person name="Hammond S."/>
            <person name="Harley J.L."/>
            <person name="Hart E."/>
            <person name="Heath P.D."/>
            <person name="Ho T.P."/>
            <person name="Hopkins B."/>
            <person name="Horne J."/>
            <person name="Howden P.J."/>
            <person name="Huckle E."/>
            <person name="Hynds C."/>
            <person name="Johnson C."/>
            <person name="Johnson D."/>
            <person name="Kana A."/>
            <person name="Kay M."/>
            <person name="Kimberley A.M."/>
            <person name="Kershaw J.K."/>
            <person name="Kokkinaki M."/>
            <person name="Laird G.K."/>
            <person name="Lawlor S."/>
            <person name="Lee H.M."/>
            <person name="Leongamornlert D.A."/>
            <person name="Laird G."/>
            <person name="Lloyd C."/>
            <person name="Lloyd D.M."/>
            <person name="Loveland J."/>
            <person name="Lovell J."/>
            <person name="McLaren S."/>
            <person name="McLay K.E."/>
            <person name="McMurray A."/>
            <person name="Mashreghi-Mohammadi M."/>
            <person name="Matthews L."/>
            <person name="Milne S."/>
            <person name="Nickerson T."/>
            <person name="Nguyen M."/>
            <person name="Overton-Larty E."/>
            <person name="Palmer S.A."/>
            <person name="Pearce A.V."/>
            <person name="Peck A.I."/>
            <person name="Pelan S."/>
            <person name="Phillimore B."/>
            <person name="Porter K."/>
            <person name="Rice C.M."/>
            <person name="Rogosin A."/>
            <person name="Ross M.T."/>
            <person name="Sarafidou T."/>
            <person name="Sehra H.K."/>
            <person name="Shownkeen R."/>
            <person name="Skuce C.D."/>
            <person name="Smith M."/>
            <person name="Standring L."/>
            <person name="Sycamore N."/>
            <person name="Tester J."/>
            <person name="Thorpe A."/>
            <person name="Torcasso W."/>
            <person name="Tracey A."/>
            <person name="Tromans A."/>
            <person name="Tsolas J."/>
            <person name="Wall M."/>
            <person name="Walsh J."/>
            <person name="Wang H."/>
            <person name="Weinstock K."/>
            <person name="West A.P."/>
            <person name="Willey D.L."/>
            <person name="Whitehead S.L."/>
            <person name="Wilming L."/>
            <person name="Wray P.W."/>
            <person name="Young L."/>
            <person name="Chen Y."/>
            <person name="Lovering R.C."/>
            <person name="Moschonas N.K."/>
            <person name="Siebert R."/>
            <person name="Fechtel K."/>
            <person name="Bentley D."/>
            <person name="Durbin R.M."/>
            <person name="Hubbard T."/>
            <person name="Doucette-Stamm L."/>
            <person name="Beck S."/>
            <person name="Smith D.R."/>
            <person name="Rogers J."/>
        </authorList>
    </citation>
    <scope>NUCLEOTIDE SEQUENCE [LARGE SCALE GENOMIC DNA]</scope>
</reference>
<reference key="2">
    <citation type="journal article" date="2004" name="Genome Res.">
        <title>The status, quality, and expansion of the NIH full-length cDNA project: the Mammalian Gene Collection (MGC).</title>
        <authorList>
            <consortium name="The MGC Project Team"/>
        </authorList>
    </citation>
    <scope>NUCLEOTIDE SEQUENCE [LARGE SCALE MRNA]</scope>
    <scope>VARIANT LYS-850</scope>
    <source>
        <tissue>Testis</tissue>
    </source>
</reference>
<reference key="3">
    <citation type="journal article" date="2006" name="Cell">
        <title>Global, in vivo, and site-specific phosphorylation dynamics in signaling networks.</title>
        <authorList>
            <person name="Olsen J.V."/>
            <person name="Blagoev B."/>
            <person name="Gnad F."/>
            <person name="Macek B."/>
            <person name="Kumar C."/>
            <person name="Mortensen P."/>
            <person name="Mann M."/>
        </authorList>
    </citation>
    <scope>IDENTIFICATION BY MASS SPECTROMETRY [LARGE SCALE ANALYSIS]</scope>
    <source>
        <tissue>Cervix carcinoma</tissue>
    </source>
</reference>
<reference key="4">
    <citation type="journal article" date="2006" name="Nat. Biotechnol.">
        <title>A probability-based approach for high-throughput protein phosphorylation analysis and site localization.</title>
        <authorList>
            <person name="Beausoleil S.A."/>
            <person name="Villen J."/>
            <person name="Gerber S.A."/>
            <person name="Rush J."/>
            <person name="Gygi S.P."/>
        </authorList>
    </citation>
    <scope>PHOSPHORYLATION [LARGE SCALE ANALYSIS] AT SER-158</scope>
    <scope>IDENTIFICATION BY MASS SPECTROMETRY [LARGE SCALE ANALYSIS]</scope>
    <source>
        <tissue>Cervix carcinoma</tissue>
    </source>
</reference>
<reference key="5">
    <citation type="journal article" date="2008" name="Mol. Cell">
        <title>Kinase-selective enrichment enables quantitative phosphoproteomics of the kinome across the cell cycle.</title>
        <authorList>
            <person name="Daub H."/>
            <person name="Olsen J.V."/>
            <person name="Bairlein M."/>
            <person name="Gnad F."/>
            <person name="Oppermann F.S."/>
            <person name="Korner R."/>
            <person name="Greff Z."/>
            <person name="Keri G."/>
            <person name="Stemmann O."/>
            <person name="Mann M."/>
        </authorList>
    </citation>
    <scope>PHOSPHORYLATION [LARGE SCALE ANALYSIS] AT SER-158</scope>
    <scope>IDENTIFICATION BY MASS SPECTROMETRY [LARGE SCALE ANALYSIS]</scope>
    <source>
        <tissue>Cervix carcinoma</tissue>
    </source>
</reference>
<reference key="6">
    <citation type="journal article" date="2008" name="PLoS Genet.">
        <title>An abundant evolutionarily conserved CSB-PiggyBac fusion protein expressed in Cockayne syndrome.</title>
        <authorList>
            <person name="Newman J.C."/>
            <person name="Bailey A.D."/>
            <person name="Fan H.Y."/>
            <person name="Pavelitz T."/>
            <person name="Weiner A.M."/>
        </authorList>
    </citation>
    <scope>ALTERNATIVE SPLICING</scope>
</reference>
<reference key="7">
    <citation type="journal article" date="2008" name="Proc. Natl. Acad. Sci. U.S.A.">
        <title>A quantitative atlas of mitotic phosphorylation.</title>
        <authorList>
            <person name="Dephoure N."/>
            <person name="Zhou C."/>
            <person name="Villen J."/>
            <person name="Beausoleil S.A."/>
            <person name="Bakalarski C.E."/>
            <person name="Elledge S.J."/>
            <person name="Gygi S.P."/>
        </authorList>
    </citation>
    <scope>PHOSPHORYLATION [LARGE SCALE ANALYSIS] AT SER-158; SER-429 AND SER-430</scope>
    <scope>IDENTIFICATION BY MASS SPECTROMETRY [LARGE SCALE ANALYSIS]</scope>
    <source>
        <tissue>Cervix carcinoma</tissue>
    </source>
</reference>
<reference key="8">
    <citation type="journal article" date="2010" name="Sci. Signal.">
        <title>Quantitative phosphoproteomics reveals widespread full phosphorylation site occupancy during mitosis.</title>
        <authorList>
            <person name="Olsen J.V."/>
            <person name="Vermeulen M."/>
            <person name="Santamaria A."/>
            <person name="Kumar C."/>
            <person name="Miller M.L."/>
            <person name="Jensen L.J."/>
            <person name="Gnad F."/>
            <person name="Cox J."/>
            <person name="Jensen T.S."/>
            <person name="Nigg E.A."/>
            <person name="Brunak S."/>
            <person name="Mann M."/>
        </authorList>
    </citation>
    <scope>PHOSPHORYLATION [LARGE SCALE ANALYSIS] AT SER-158</scope>
    <scope>IDENTIFICATION BY MASS SPECTROMETRY [LARGE SCALE ANALYSIS]</scope>
    <source>
        <tissue>Cervix carcinoma</tissue>
    </source>
</reference>
<reference key="9">
    <citation type="journal article" date="2011" name="Sci. Signal.">
        <title>System-wide temporal characterization of the proteome and phosphoproteome of human embryonic stem cell differentiation.</title>
        <authorList>
            <person name="Rigbolt K.T."/>
            <person name="Prokhorova T.A."/>
            <person name="Akimov V."/>
            <person name="Henningsen J."/>
            <person name="Johansen P.T."/>
            <person name="Kratchmarova I."/>
            <person name="Kassem M."/>
            <person name="Mann M."/>
            <person name="Olsen J.V."/>
            <person name="Blagoev B."/>
        </authorList>
    </citation>
    <scope>PHOSPHORYLATION [LARGE SCALE ANALYSIS] AT SER-429 AND SER-430</scope>
    <scope>IDENTIFICATION BY MASS SPECTROMETRY [LARGE SCALE ANALYSIS]</scope>
</reference>
<reference key="10">
    <citation type="journal article" date="2012" name="DNA Repair">
        <title>The conserved Cockayne syndrome B-piggyBac fusion protein (CSB-PGBD3) affects DNA repair and induces both interferon-like and innate antiviral responses in CSB-null cells.</title>
        <authorList>
            <person name="Bailey A.D."/>
            <person name="Gray L.T."/>
            <person name="Pavelitz T."/>
            <person name="Newman J.C."/>
            <person name="Horibata K."/>
            <person name="Tanaka K."/>
            <person name="Weiner A.M."/>
        </authorList>
    </citation>
    <scope>FUNCTION</scope>
</reference>
<reference key="11">
    <citation type="journal article" date="2013" name="J. Proteome Res.">
        <title>Toward a comprehensive characterization of a human cancer cell phosphoproteome.</title>
        <authorList>
            <person name="Zhou H."/>
            <person name="Di Palma S."/>
            <person name="Preisinger C."/>
            <person name="Peng M."/>
            <person name="Polat A.N."/>
            <person name="Heck A.J."/>
            <person name="Mohammed S."/>
        </authorList>
    </citation>
    <scope>PHOSPHORYLATION [LARGE SCALE ANALYSIS] AT SER-158 AND SER-554</scope>
    <scope>IDENTIFICATION BY MASS SPECTROMETRY [LARGE SCALE ANALYSIS]</scope>
    <source>
        <tissue>Cervix carcinoma</tissue>
        <tissue>Erythroleukemia</tissue>
    </source>
</reference>
<reference key="12">
    <citation type="journal article" date="2015" name="PLoS Genet.">
        <title>CSB-PGBD3 mutations cause premature ovarian failure.</title>
        <authorList>
            <person name="Qin Y."/>
            <person name="Guo T."/>
            <person name="Li G."/>
            <person name="Tang T.S."/>
            <person name="Zhao S."/>
            <person name="Jiao X."/>
            <person name="Gong J."/>
            <person name="Gao F."/>
            <person name="Guo C."/>
            <person name="Simpson J.L."/>
            <person name="Chen Z.J."/>
        </authorList>
    </citation>
    <scope>INVOLVEMENT IN POF11</scope>
    <scope>VARIANTS POF11 ASP-746 AND ILE-1056</scope>
    <scope>CHARACTERIZATION OF VARIANTS POF11 ASP-746 AND ILE-1056</scope>
    <scope>SUBCELLULAR LOCATION</scope>
    <scope>TISSUE SPECIFICITY</scope>
</reference>
<reference key="13">
    <citation type="journal article" date="2017" name="Nat. Struct. Mol. Biol.">
        <title>Site-specific mapping of the human SUMO proteome reveals co-modification with phosphorylation.</title>
        <authorList>
            <person name="Hendriks I.A."/>
            <person name="Lyon D."/>
            <person name="Young C."/>
            <person name="Jensen L.J."/>
            <person name="Vertegaal A.C."/>
            <person name="Nielsen M.L."/>
        </authorList>
    </citation>
    <scope>SUMOYLATION [LARGE SCALE ANALYSIS] AT LYS-255</scope>
    <scope>IDENTIFICATION BY MASS SPECTROMETRY [LARGE SCALE ANALYSIS]</scope>
</reference>
<dbReference type="EMBL" id="AL138760">
    <property type="status" value="NOT_ANNOTATED_CDS"/>
    <property type="molecule type" value="Genomic_DNA"/>
</dbReference>
<dbReference type="EMBL" id="BC034479">
    <property type="protein sequence ID" value="AAH34479.1"/>
    <property type="molecule type" value="mRNA"/>
</dbReference>
<dbReference type="CCDS" id="CCDS60529.1"/>
<dbReference type="RefSeq" id="NP_001263987.1">
    <molecule id="P0DP91-1"/>
    <property type="nucleotide sequence ID" value="NM_001277058.2"/>
</dbReference>
<dbReference type="RefSeq" id="NP_001263988.1">
    <molecule id="P0DP91-1"/>
    <property type="nucleotide sequence ID" value="NM_001277059.2"/>
</dbReference>
<dbReference type="SMR" id="P0DP91"/>
<dbReference type="IntAct" id="P0DP91">
    <property type="interactions" value="11"/>
</dbReference>
<dbReference type="iPTMnet" id="P0DP91"/>
<dbReference type="PhosphoSitePlus" id="P0DP91"/>
<dbReference type="BioMuta" id="CSB-PGBD3"/>
<dbReference type="jPOST" id="P0DP91"/>
<dbReference type="MassIVE" id="P0DP91"/>
<dbReference type="PaxDb" id="9606-ENSP00000423550"/>
<dbReference type="Pumba" id="P0DP91"/>
<dbReference type="Antibodypedia" id="34972">
    <property type="antibodies" value="410 antibodies from 35 providers"/>
</dbReference>
<dbReference type="DNASU" id="2074"/>
<dbReference type="Ensembl" id="ENST00000447839.7">
    <molecule id="P0DP91-1"/>
    <property type="protein sequence ID" value="ENSP00000387966.2"/>
    <property type="gene ID" value="ENSG00000225830.16"/>
</dbReference>
<dbReference type="Ensembl" id="ENST00000515869.1">
    <molecule id="P0DP91-1"/>
    <property type="protein sequence ID" value="ENSP00000423550.1"/>
    <property type="gene ID" value="ENSG00000225830.16"/>
</dbReference>
<dbReference type="GeneID" id="2074"/>
<dbReference type="AGR" id="HGNC:3438"/>
<dbReference type="CTD" id="2074"/>
<dbReference type="DisGeNET" id="2074"/>
<dbReference type="GeneCards" id="ERCC6"/>
<dbReference type="GeneReviews" id="ERCC6"/>
<dbReference type="HGNC" id="HGNC:3438">
    <property type="gene designation" value="ERCC6"/>
</dbReference>
<dbReference type="HPA" id="ENSG00000225830">
    <property type="expression patterns" value="Low tissue specificity"/>
</dbReference>
<dbReference type="MalaCards" id="ERCC6"/>
<dbReference type="MIM" id="609413">
    <property type="type" value="gene"/>
</dbReference>
<dbReference type="MIM" id="616946">
    <property type="type" value="phenotype"/>
</dbReference>
<dbReference type="neXtProt" id="NX_P0DP91"/>
<dbReference type="OpenTargets" id="ENSG00000225830"/>
<dbReference type="VEuPathDB" id="HostDB:ENSG00000225830"/>
<dbReference type="eggNOG" id="KOG0387">
    <property type="taxonomic scope" value="Eukaryota"/>
</dbReference>
<dbReference type="GeneTree" id="ENSGT00940000158057"/>
<dbReference type="OrthoDB" id="413460at2759"/>
<dbReference type="PAN-GO" id="P0DP91">
    <property type="GO annotations" value="1 GO annotation based on evolutionary models"/>
</dbReference>
<dbReference type="PathwayCommons" id="P0DP91"/>
<dbReference type="SignaLink" id="P0DP91"/>
<dbReference type="Pharos" id="P0DP91">
    <property type="development level" value="Tbio"/>
</dbReference>
<dbReference type="Proteomes" id="UP000005640">
    <property type="component" value="Chromosome 10"/>
</dbReference>
<dbReference type="RNAct" id="P0DP91">
    <property type="molecule type" value="protein"/>
</dbReference>
<dbReference type="Bgee" id="ENSG00000225830">
    <property type="expression patterns" value="Expressed in oocyte and 176 other cell types or tissues"/>
</dbReference>
<dbReference type="ExpressionAtlas" id="P0DP91">
    <property type="expression patterns" value="baseline and differential"/>
</dbReference>
<dbReference type="GO" id="GO:0016604">
    <property type="term" value="C:nuclear body"/>
    <property type="evidence" value="ECO:0000314"/>
    <property type="project" value="HPA"/>
</dbReference>
<dbReference type="GO" id="GO:0005654">
    <property type="term" value="C:nucleoplasm"/>
    <property type="evidence" value="ECO:0000314"/>
    <property type="project" value="HPA"/>
</dbReference>
<dbReference type="GO" id="GO:0043565">
    <property type="term" value="F:sequence-specific DNA binding"/>
    <property type="evidence" value="ECO:0000314"/>
    <property type="project" value="UniProtKB"/>
</dbReference>
<dbReference type="GO" id="GO:0002230">
    <property type="term" value="P:positive regulation of defense response to virus by host"/>
    <property type="evidence" value="ECO:0000315"/>
    <property type="project" value="UniProtKB"/>
</dbReference>
<dbReference type="GO" id="GO:0045739">
    <property type="term" value="P:positive regulation of DNA repair"/>
    <property type="evidence" value="ECO:0000315"/>
    <property type="project" value="UniProtKB"/>
</dbReference>
<dbReference type="GO" id="GO:0010628">
    <property type="term" value="P:positive regulation of gene expression"/>
    <property type="evidence" value="ECO:0000315"/>
    <property type="project" value="UniProtKB"/>
</dbReference>
<dbReference type="GO" id="GO:0033141">
    <property type="term" value="P:positive regulation of peptidyl-serine phosphorylation of STAT protein"/>
    <property type="evidence" value="ECO:0000315"/>
    <property type="project" value="UniProtKB"/>
</dbReference>
<dbReference type="CDD" id="cd21397">
    <property type="entry name" value="cc_ERCC-6_N"/>
    <property type="match status" value="1"/>
</dbReference>
<dbReference type="InterPro" id="IPR029526">
    <property type="entry name" value="PGBD"/>
</dbReference>
<dbReference type="InterPro" id="IPR052638">
    <property type="entry name" value="PiggyBac_TE-derived"/>
</dbReference>
<dbReference type="PANTHER" id="PTHR47055">
    <property type="entry name" value="DDE_TNP_1_7 DOMAIN-CONTAINING PROTEIN"/>
    <property type="match status" value="1"/>
</dbReference>
<dbReference type="PANTHER" id="PTHR47055:SF2">
    <property type="entry name" value="PIGGYBAC TRANSPOSABLE ELEMENT-DERIVED PROTEIN 2-RELATED"/>
    <property type="match status" value="1"/>
</dbReference>
<dbReference type="Pfam" id="PF13843">
    <property type="entry name" value="DDE_Tnp_1_7"/>
    <property type="match status" value="1"/>
</dbReference>
<proteinExistence type="evidence at protein level"/>
<accession>P0DP91</accession>
<keyword id="KW-0025">Alternative splicing</keyword>
<keyword id="KW-0225">Disease variant</keyword>
<keyword id="KW-1017">Isopeptide bond</keyword>
<keyword id="KW-0539">Nucleus</keyword>
<keyword id="KW-0597">Phosphoprotein</keyword>
<keyword id="KW-1066">Premature ovarian failure</keyword>
<keyword id="KW-1185">Reference proteome</keyword>
<keyword id="KW-0832">Ubl conjugation</keyword>
<feature type="chain" id="PRO_0000441747" description="Chimeric ERCC6-PGBD3 protein">
    <location>
        <begin position="1"/>
        <end position="1061"/>
    </location>
</feature>
<feature type="region of interest" description="Disordered" evidence="1">
    <location>
        <begin position="1"/>
        <end position="39"/>
    </location>
</feature>
<feature type="region of interest" description="Disordered" evidence="1">
    <location>
        <begin position="287"/>
        <end position="323"/>
    </location>
</feature>
<feature type="region of interest" description="Disordered" evidence="1">
    <location>
        <begin position="344"/>
        <end position="466"/>
    </location>
</feature>
<feature type="region of interest" description="Disordered" evidence="1">
    <location>
        <begin position="494"/>
        <end position="521"/>
    </location>
</feature>
<feature type="region of interest" description="Disordered" evidence="1">
    <location>
        <begin position="537"/>
        <end position="573"/>
    </location>
</feature>
<feature type="compositionally biased region" description="Polar residues" evidence="1">
    <location>
        <begin position="8"/>
        <end position="27"/>
    </location>
</feature>
<feature type="compositionally biased region" description="Basic and acidic residues" evidence="1">
    <location>
        <begin position="353"/>
        <end position="363"/>
    </location>
</feature>
<feature type="compositionally biased region" description="Acidic residues" evidence="1">
    <location>
        <begin position="364"/>
        <end position="392"/>
    </location>
</feature>
<feature type="compositionally biased region" description="Basic and acidic residues" evidence="1">
    <location>
        <begin position="451"/>
        <end position="462"/>
    </location>
</feature>
<feature type="compositionally biased region" description="Acidic residues" evidence="1">
    <location>
        <begin position="506"/>
        <end position="515"/>
    </location>
</feature>
<feature type="modified residue" description="Phosphoserine" evidence="9 10 11 12 14">
    <location>
        <position position="158"/>
    </location>
</feature>
<feature type="modified residue" description="Phosphoserine" evidence="10 13">
    <location>
        <position position="429"/>
    </location>
</feature>
<feature type="modified residue" description="Phosphoserine" evidence="10 13">
    <location>
        <position position="430"/>
    </location>
</feature>
<feature type="modified residue" description="Phosphoserine" evidence="14">
    <location>
        <position position="554"/>
    </location>
</feature>
<feature type="cross-link" description="Glycyl lysine isopeptide (Lys-Gly) (interchain with G-Cter in SUMO2)" evidence="15">
    <location>
        <position position="255"/>
    </location>
</feature>
<feature type="sequence variant" id="VAR_079009" description="In POF11; weaker cellular response to DNA damage as indicated by delayed recruitment of mutant protein to DNA damaged sites, compared to ERCC6 isoform 1; no effect on interaction with RNA polymerase II either after UV or H(2)O(2) damage." evidence="5">
    <original>G</original>
    <variation>D</variation>
    <location>
        <position position="746"/>
    </location>
</feature>
<feature type="sequence variant" id="VAR_079010" description="In dbSNP:rs4253072." evidence="2">
    <original>R</original>
    <variation>K</variation>
    <location>
        <position position="850"/>
    </location>
</feature>
<feature type="sequence variant" id="VAR_079011" description="In POF11; weaker cellular response to DNA damage as indicated by delayed recruitment of mutant protein to DNA damaged sites, compared to ERCC6 isoform 1; no effect on interaction with RNA polymerase II either after UV or H(2)O(2) damage." evidence="5">
    <original>V</original>
    <variation>I</variation>
    <location>
        <position position="1056"/>
    </location>
</feature>
<feature type="sequence conflict" description="In Ref. 2; AAH34479." evidence="7" ref="2">
    <original>V</original>
    <variation>A</variation>
    <location>
        <position position="346"/>
    </location>
</feature>
<protein>
    <recommendedName>
        <fullName>Chimeric ERCC6-PGBD3 protein</fullName>
    </recommendedName>
    <alternativeName>
        <fullName>Chimeric CSB-PGBD3 protein</fullName>
    </alternativeName>
</protein>
<sequence>MPNEGIPHSSQTQEQDCLQSQPVSNNEEMAIKQESGGDGEVEEYLSFRSVGDGLSTSAVGCASAAPRRGPALLHIDRHQIQAVEPSAQALELQGLGVDVYDQDVLEQGVLQQVDNAIHEASRASQLVDVEKEYRSVLDDLTSCTTSLRQINKIIEQLSPQAATSRDINRKLDSVKRQKYNKEQQLKKITAKQKHLQAILGGAEVKIELDHASLEEDAEPGPSSLGSMLMPVQETAWEELIRTGQMTPFGTQIPQKQEKKPRKIMLNEASGFEKYLADQAKLSFERKKQGCNKRAARKAPAPVTPPAPVQNKNKPNKKARVLSKKEERLKKHIKKLQKRALQFQGKVGLPKARRPWESDMRPEAEGDSEGEESEYFPTEEEEEEEDDEVEGAEADLSGDGTDYELKPLPKGGKRQKKVPVQEIDDDFFPSSGEEAEAASVGEGGGGGRKVGRYRDDGDEDYYKQRLSPKMPRTLSLHEITDLLETDDSIEASAIVIQPPENATAPVSDEESGDEEGGTINNLPGSLLHTAAYLIQDGSDAESDSDDPSYAPKDDSPDEVPSTFTVQQPPPSRRRKMTKILCKWKKADLTVQPVAGRVTAPPNDFFTVMRTPTEILELFLDDEVIELIVKYSNLYACSKGVHLGLTSSEFKCFLGIIFLSGYVSVPRRRMFWEQRTDVHNVLVSAAMRRDRFETIFSNLHVADNANLDPVDKFSKLRPLISKLNERCMKFVPNETYFSFDEFMVPYFGRHGCKQFIRGKPIRFGYKFWCGATCLGYICWFQPYQGKNPNTKHEEYGVGASLVLQFSEALTEAHPGQYHFVFNNFFTSIALLDKLSSMGHQATGTVRKDHIDRVPLESDVALKKKERGTFDYRIDGKGNIVCRWNDNSVVTVASSGAGIHPLCLVSRYSQKLKKKIQVQQPNMIKVYNQFMGGVDRADENIDKYRASIRGKKWYSSPLLFCFELVLQNAWQLHKTYDEKPVDFLEFRRRVVCHYLETHGHPPEPGQKGRPQKRNIDSRYDGINHVIVKQGKQTRCAECHKNTTFRCEKCDVALHVKCSVEYHTE</sequence>
<name>ERPG3_HUMAN</name>
<organism>
    <name type="scientific">Homo sapiens</name>
    <name type="common">Human</name>
    <dbReference type="NCBI Taxonomy" id="9606"/>
    <lineage>
        <taxon>Eukaryota</taxon>
        <taxon>Metazoa</taxon>
        <taxon>Chordata</taxon>
        <taxon>Craniata</taxon>
        <taxon>Vertebrata</taxon>
        <taxon>Euteleostomi</taxon>
        <taxon>Mammalia</taxon>
        <taxon>Eutheria</taxon>
        <taxon>Euarchontoglires</taxon>
        <taxon>Primates</taxon>
        <taxon>Haplorrhini</taxon>
        <taxon>Catarrhini</taxon>
        <taxon>Hominidae</taxon>
        <taxon>Homo</taxon>
    </lineage>
</organism>
<gene>
    <name evidence="8" type="primary">ERCC6</name>
</gene>
<comment type="function">
    <text evidence="4">Involved in repair of DNA damage following UV irradiation, acting either in the absence of ERCC6 or synergistically with ERCC6. Involved in the regulation of gene expression. In the absence of ERCC6, induces the expression of genes characteristic of interferon-like antiviral responses. This response is almost completely suppressed in the presence of ERCC6. In the presence of ERCC6, regulates the expression of genes involved in metabolism regulation, including IGFBP5 and IGFBP7. In vitro binds to PGBD3-related transposable elements, called MER85s; these non-autonomous 140 bp elements are characterized by the presence of PGBD3 terminal inverted repeats and the absence of internal transposase ORF.</text>
</comment>
<comment type="subcellular location">
    <subcellularLocation>
        <location evidence="5">Nucleus</location>
    </subcellularLocation>
</comment>
<comment type="alternative products">
    <event type="alternative splicing"/>
    <isoform>
        <id>P0DP91-1</id>
        <id>Q03468-2</id>
        <name evidence="6">CSB-PGBD3</name>
        <sequence type="displayed"/>
    </isoform>
    <isoform>
        <id>Q03468-1</id>
        <name>CSB</name>
        <sequence type="external"/>
    </isoform>
    <isoform>
        <id>Q8N328-1</id>
        <name>PGBD3</name>
        <sequence type="external"/>
    </isoform>
</comment>
<comment type="tissue specificity">
    <text evidence="5">Expressed in heart and oocytes, but not in granulosa cells (at protein level).</text>
</comment>
<comment type="disease" evidence="5">
    <disease id="DI-04722">
        <name>Premature ovarian failure 11</name>
        <acronym>POF11</acronym>
        <description>An ovarian disorder defined as the cessation of ovarian function under the age of 40 years. It is characterized by oligomenorrhea or amenorrhea, in the presence of elevated levels of serum gonadotropins and low estradiol.</description>
        <dbReference type="MIM" id="616946"/>
    </disease>
    <text evidence="5">The protein represented in this entry is involved in disease pathogenesis. Disease-causing variants affect isoform CSB-PGBD3, which is a chimeric protein between ERCC6 N-terminus and the entire PGBD3 sequence.</text>
</comment>
<comment type="miscellaneous">
    <molecule>Isoform CSB-PGBD3</molecule>
    <text evidence="3">Produced by an alternative splicing event that joins the first 5 exons of ERCC6 gene in frame to the entire PGBD3 coding region, which is located within ERCC6 intron 5. The resulting chimeric protein consists of the N-terminal 465 residues of ERCC6 tethered to the entire PGBD3 sequence.</text>
</comment>